<comment type="function">
    <text evidence="1">This protein specifically catalyzes the removal of signal peptides from prolipoproteins.</text>
</comment>
<comment type="catalytic activity">
    <reaction evidence="1">
        <text>Release of signal peptides from bacterial membrane prolipoproteins. Hydrolyzes -Xaa-Yaa-Zaa-|-(S,diacylglyceryl)Cys-, in which Xaa is hydrophobic (preferably Leu), and Yaa (Ala or Ser) and Zaa (Gly or Ala) have small, neutral side chains.</text>
        <dbReference type="EC" id="3.4.23.36"/>
    </reaction>
</comment>
<comment type="pathway">
    <text evidence="1">Protein modification; lipoprotein biosynthesis (signal peptide cleavage).</text>
</comment>
<comment type="subcellular location">
    <subcellularLocation>
        <location evidence="1">Cell membrane</location>
        <topology evidence="1">Multi-pass membrane protein</topology>
    </subcellularLocation>
</comment>
<comment type="similarity">
    <text evidence="1">Belongs to the peptidase A8 family.</text>
</comment>
<organism>
    <name type="scientific">Lactiplantibacillus plantarum (strain ATCC BAA-793 / NCIMB 8826 / WCFS1)</name>
    <name type="common">Lactobacillus plantarum</name>
    <dbReference type="NCBI Taxonomy" id="220668"/>
    <lineage>
        <taxon>Bacteria</taxon>
        <taxon>Bacillati</taxon>
        <taxon>Bacillota</taxon>
        <taxon>Bacilli</taxon>
        <taxon>Lactobacillales</taxon>
        <taxon>Lactobacillaceae</taxon>
        <taxon>Lactiplantibacillus</taxon>
    </lineage>
</organism>
<feature type="chain" id="PRO_0000178788" description="Lipoprotein signal peptidase">
    <location>
        <begin position="1"/>
        <end position="149"/>
    </location>
</feature>
<feature type="transmembrane region" description="Helical" evidence="1">
    <location>
        <begin position="24"/>
        <end position="44"/>
    </location>
</feature>
<feature type="transmembrane region" description="Helical" evidence="1">
    <location>
        <begin position="57"/>
        <end position="77"/>
    </location>
</feature>
<feature type="transmembrane region" description="Helical" evidence="1">
    <location>
        <begin position="81"/>
        <end position="101"/>
    </location>
</feature>
<feature type="transmembrane region" description="Helical" evidence="1">
    <location>
        <begin position="122"/>
        <end position="142"/>
    </location>
</feature>
<feature type="active site" evidence="1">
    <location>
        <position position="111"/>
    </location>
</feature>
<feature type="active site" evidence="1">
    <location>
        <position position="127"/>
    </location>
</feature>
<proteinExistence type="inferred from homology"/>
<name>LSPA_LACPL</name>
<protein>
    <recommendedName>
        <fullName evidence="1">Lipoprotein signal peptidase</fullName>
        <ecNumber evidence="1">3.4.23.36</ecNumber>
    </recommendedName>
    <alternativeName>
        <fullName evidence="1">Prolipoprotein signal peptidase</fullName>
    </alternativeName>
    <alternativeName>
        <fullName evidence="1">Signal peptidase II</fullName>
        <shortName evidence="1">SPase II</shortName>
    </alternativeName>
</protein>
<dbReference type="EC" id="3.4.23.36" evidence="1"/>
<dbReference type="EMBL" id="AL935263">
    <property type="protein sequence ID" value="CCC79067.1"/>
    <property type="molecule type" value="Genomic_DNA"/>
</dbReference>
<dbReference type="RefSeq" id="WP_003640508.1">
    <property type="nucleotide sequence ID" value="NC_004567.2"/>
</dbReference>
<dbReference type="RefSeq" id="YP_004889581.1">
    <property type="nucleotide sequence ID" value="NC_004567.2"/>
</dbReference>
<dbReference type="SMR" id="Q88W75"/>
<dbReference type="STRING" id="220668.lp_1780"/>
<dbReference type="EnsemblBacteria" id="CCC79067">
    <property type="protein sequence ID" value="CCC79067"/>
    <property type="gene ID" value="lp_1780"/>
</dbReference>
<dbReference type="GeneID" id="77218163"/>
<dbReference type="KEGG" id="lpl:lp_1780"/>
<dbReference type="PATRIC" id="fig|220668.9.peg.1501"/>
<dbReference type="eggNOG" id="COG0597">
    <property type="taxonomic scope" value="Bacteria"/>
</dbReference>
<dbReference type="HOGENOM" id="CLU_083252_3_3_9"/>
<dbReference type="OrthoDB" id="9810259at2"/>
<dbReference type="PhylomeDB" id="Q88W75"/>
<dbReference type="UniPathway" id="UPA00665"/>
<dbReference type="Proteomes" id="UP000000432">
    <property type="component" value="Chromosome"/>
</dbReference>
<dbReference type="GO" id="GO:0005886">
    <property type="term" value="C:plasma membrane"/>
    <property type="evidence" value="ECO:0007669"/>
    <property type="project" value="UniProtKB-SubCell"/>
</dbReference>
<dbReference type="GO" id="GO:0004190">
    <property type="term" value="F:aspartic-type endopeptidase activity"/>
    <property type="evidence" value="ECO:0007669"/>
    <property type="project" value="UniProtKB-UniRule"/>
</dbReference>
<dbReference type="GO" id="GO:0006508">
    <property type="term" value="P:proteolysis"/>
    <property type="evidence" value="ECO:0007669"/>
    <property type="project" value="UniProtKB-KW"/>
</dbReference>
<dbReference type="HAMAP" id="MF_00161">
    <property type="entry name" value="LspA"/>
    <property type="match status" value="1"/>
</dbReference>
<dbReference type="InterPro" id="IPR001872">
    <property type="entry name" value="Peptidase_A8"/>
</dbReference>
<dbReference type="NCBIfam" id="TIGR00077">
    <property type="entry name" value="lspA"/>
    <property type="match status" value="1"/>
</dbReference>
<dbReference type="PANTHER" id="PTHR33695">
    <property type="entry name" value="LIPOPROTEIN SIGNAL PEPTIDASE"/>
    <property type="match status" value="1"/>
</dbReference>
<dbReference type="PANTHER" id="PTHR33695:SF1">
    <property type="entry name" value="LIPOPROTEIN SIGNAL PEPTIDASE"/>
    <property type="match status" value="1"/>
</dbReference>
<dbReference type="Pfam" id="PF01252">
    <property type="entry name" value="Peptidase_A8"/>
    <property type="match status" value="1"/>
</dbReference>
<dbReference type="PRINTS" id="PR00781">
    <property type="entry name" value="LIPOSIGPTASE"/>
</dbReference>
<dbReference type="PROSITE" id="PS00855">
    <property type="entry name" value="SPASE_II"/>
    <property type="match status" value="1"/>
</dbReference>
<evidence type="ECO:0000255" key="1">
    <source>
        <dbReference type="HAMAP-Rule" id="MF_00161"/>
    </source>
</evidence>
<gene>
    <name evidence="1" type="primary">lspA</name>
    <name type="ordered locus">lp_1780</name>
</gene>
<keyword id="KW-0064">Aspartyl protease</keyword>
<keyword id="KW-1003">Cell membrane</keyword>
<keyword id="KW-0378">Hydrolase</keyword>
<keyword id="KW-0472">Membrane</keyword>
<keyword id="KW-0645">Protease</keyword>
<keyword id="KW-1185">Reference proteome</keyword>
<keyword id="KW-0812">Transmembrane</keyword>
<keyword id="KW-1133">Transmembrane helix</keyword>
<sequence>MWIYLILMVALVIIDQVIKAAIVSHIALGASTSIVTGLLSLTNLHNNGAAWSILEGKMWFFYLISVIALIVMGYLLWRLRGKWLYEVGISLMIAGTLGNFIDRLRIGYVVDMFQLDFINFPIFNFADSCLTVGVIFILIGVLRDDSFEK</sequence>
<reference key="1">
    <citation type="journal article" date="2003" name="Proc. Natl. Acad. Sci. U.S.A.">
        <title>Complete genome sequence of Lactobacillus plantarum WCFS1.</title>
        <authorList>
            <person name="Kleerebezem M."/>
            <person name="Boekhorst J."/>
            <person name="van Kranenburg R."/>
            <person name="Molenaar D."/>
            <person name="Kuipers O.P."/>
            <person name="Leer R."/>
            <person name="Tarchini R."/>
            <person name="Peters S.A."/>
            <person name="Sandbrink H.M."/>
            <person name="Fiers M.W.E.J."/>
            <person name="Stiekema W."/>
            <person name="Klein Lankhorst R.M."/>
            <person name="Bron P.A."/>
            <person name="Hoffer S.M."/>
            <person name="Nierop Groot M.N."/>
            <person name="Kerkhoven R."/>
            <person name="De Vries M."/>
            <person name="Ursing B."/>
            <person name="De Vos W.M."/>
            <person name="Siezen R.J."/>
        </authorList>
    </citation>
    <scope>NUCLEOTIDE SEQUENCE [LARGE SCALE GENOMIC DNA]</scope>
    <source>
        <strain>ATCC BAA-793 / NCIMB 8826 / WCFS1</strain>
    </source>
</reference>
<reference key="2">
    <citation type="journal article" date="2012" name="J. Bacteriol.">
        <title>Complete resequencing and reannotation of the Lactobacillus plantarum WCFS1 genome.</title>
        <authorList>
            <person name="Siezen R.J."/>
            <person name="Francke C."/>
            <person name="Renckens B."/>
            <person name="Boekhorst J."/>
            <person name="Wels M."/>
            <person name="Kleerebezem M."/>
            <person name="van Hijum S.A."/>
        </authorList>
    </citation>
    <scope>NUCLEOTIDE SEQUENCE [LARGE SCALE GENOMIC DNA]</scope>
    <scope>GENOME REANNOTATION</scope>
    <source>
        <strain>ATCC BAA-793 / NCIMB 8826 / WCFS1</strain>
    </source>
</reference>
<accession>Q88W75</accession>
<accession>F9UPC8</accession>